<dbReference type="EMBL" id="CP001177">
    <property type="protein sequence ID" value="ACJ82091.1"/>
    <property type="molecule type" value="Genomic_DNA"/>
</dbReference>
<dbReference type="SMR" id="B7HK93"/>
<dbReference type="KEGG" id="bcr:BCAH187_A1528"/>
<dbReference type="HOGENOM" id="CLU_108696_19_0_9"/>
<dbReference type="UniPathway" id="UPA00556"/>
<dbReference type="Proteomes" id="UP000002214">
    <property type="component" value="Chromosome"/>
</dbReference>
<dbReference type="GO" id="GO:0005737">
    <property type="term" value="C:cytoplasm"/>
    <property type="evidence" value="ECO:0007669"/>
    <property type="project" value="UniProtKB-SubCell"/>
</dbReference>
<dbReference type="GO" id="GO:0036370">
    <property type="term" value="F:D-alanyl carrier activity"/>
    <property type="evidence" value="ECO:0007669"/>
    <property type="project" value="UniProtKB-UniRule"/>
</dbReference>
<dbReference type="GO" id="GO:0071555">
    <property type="term" value="P:cell wall organization"/>
    <property type="evidence" value="ECO:0007669"/>
    <property type="project" value="UniProtKB-KW"/>
</dbReference>
<dbReference type="GO" id="GO:0070395">
    <property type="term" value="P:lipoteichoic acid biosynthetic process"/>
    <property type="evidence" value="ECO:0007669"/>
    <property type="project" value="UniProtKB-UniRule"/>
</dbReference>
<dbReference type="FunFam" id="1.10.1200.10:FF:000004">
    <property type="entry name" value="D-alanyl carrier protein"/>
    <property type="match status" value="1"/>
</dbReference>
<dbReference type="Gene3D" id="1.10.1200.10">
    <property type="entry name" value="ACP-like"/>
    <property type="match status" value="1"/>
</dbReference>
<dbReference type="HAMAP" id="MF_00565">
    <property type="entry name" value="DltC"/>
    <property type="match status" value="1"/>
</dbReference>
<dbReference type="InterPro" id="IPR036736">
    <property type="entry name" value="ACP-like_sf"/>
</dbReference>
<dbReference type="InterPro" id="IPR003230">
    <property type="entry name" value="DltC"/>
</dbReference>
<dbReference type="InterPro" id="IPR009081">
    <property type="entry name" value="PP-bd_ACP"/>
</dbReference>
<dbReference type="NCBIfam" id="TIGR01688">
    <property type="entry name" value="dltC"/>
    <property type="match status" value="1"/>
</dbReference>
<dbReference type="NCBIfam" id="NF003464">
    <property type="entry name" value="PRK05087.1"/>
    <property type="match status" value="1"/>
</dbReference>
<dbReference type="Pfam" id="PF00550">
    <property type="entry name" value="PP-binding"/>
    <property type="match status" value="1"/>
</dbReference>
<dbReference type="SUPFAM" id="SSF47336">
    <property type="entry name" value="ACP-like"/>
    <property type="match status" value="1"/>
</dbReference>
<dbReference type="PROSITE" id="PS50075">
    <property type="entry name" value="CARRIER"/>
    <property type="match status" value="1"/>
</dbReference>
<comment type="function">
    <text evidence="1">Carrier protein involved in the D-alanylation of lipoteichoic acid (LTA). The loading of thioester-linked D-alanine onto DltC is catalyzed by D-alanine--D-alanyl carrier protein ligase DltA. The DltC-carried D-alanyl group is further transferred to cell membrane phosphatidylglycerol (PG) by forming an ester bond, probably catalyzed by DltD. D-alanylation of LTA plays an important role in modulating the properties of the cell wall in Gram-positive bacteria, influencing the net charge of the cell wall.</text>
</comment>
<comment type="pathway">
    <text evidence="1">Cell wall biogenesis; lipoteichoic acid biosynthesis.</text>
</comment>
<comment type="subcellular location">
    <subcellularLocation>
        <location evidence="1">Cytoplasm</location>
    </subcellularLocation>
</comment>
<comment type="PTM">
    <text evidence="1">4'-phosphopantetheine is transferred from CoA to a specific serine of apo-DCP.</text>
</comment>
<comment type="similarity">
    <text evidence="1">Belongs to the DltC family.</text>
</comment>
<reference key="1">
    <citation type="submission" date="2008-10" db="EMBL/GenBank/DDBJ databases">
        <title>Genome sequence of Bacillus cereus AH187.</title>
        <authorList>
            <person name="Dodson R.J."/>
            <person name="Durkin A.S."/>
            <person name="Rosovitz M.J."/>
            <person name="Rasko D.A."/>
            <person name="Kolsto A.B."/>
            <person name="Okstad O.A."/>
            <person name="Ravel J."/>
            <person name="Sutton G."/>
        </authorList>
    </citation>
    <scope>NUCLEOTIDE SEQUENCE [LARGE SCALE GENOMIC DNA]</scope>
    <source>
        <strain>AH187</strain>
    </source>
</reference>
<keyword id="KW-0961">Cell wall biogenesis/degradation</keyword>
<keyword id="KW-0963">Cytoplasm</keyword>
<keyword id="KW-0596">Phosphopantetheine</keyword>
<keyword id="KW-0597">Phosphoprotein</keyword>
<evidence type="ECO:0000255" key="1">
    <source>
        <dbReference type="HAMAP-Rule" id="MF_00565"/>
    </source>
</evidence>
<gene>
    <name evidence="1" type="primary">dltC</name>
    <name type="ordered locus">BCAH187_A1528</name>
</gene>
<name>DLTC_BACC7</name>
<organism>
    <name type="scientific">Bacillus cereus (strain AH187)</name>
    <dbReference type="NCBI Taxonomy" id="405534"/>
    <lineage>
        <taxon>Bacteria</taxon>
        <taxon>Bacillati</taxon>
        <taxon>Bacillota</taxon>
        <taxon>Bacilli</taxon>
        <taxon>Bacillales</taxon>
        <taxon>Bacillaceae</taxon>
        <taxon>Bacillus</taxon>
        <taxon>Bacillus cereus group</taxon>
    </lineage>
</organism>
<sequence length="79" mass="9261">MAEFKEQVLDILEEVCENDIVKENLDVQLFEEGILDSFAVVSLLVEFQERLDIEVSISDFDRDEWATPNMVIKKLEEIR</sequence>
<accession>B7HK93</accession>
<proteinExistence type="inferred from homology"/>
<feature type="chain" id="PRO_1000129397" description="D-alanyl carrier protein">
    <location>
        <begin position="1"/>
        <end position="79"/>
    </location>
</feature>
<feature type="domain" description="Carrier" evidence="1">
    <location>
        <begin position="2"/>
        <end position="79"/>
    </location>
</feature>
<feature type="modified residue" description="O-(pantetheine 4'-phosphoryl)serine" evidence="1">
    <location>
        <position position="37"/>
    </location>
</feature>
<protein>
    <recommendedName>
        <fullName evidence="1">D-alanyl carrier protein</fullName>
        <shortName evidence="1">DCP</shortName>
    </recommendedName>
    <alternativeName>
        <fullName evidence="1">D-alanine--poly(phosphoribitol) ligase subunit 2</fullName>
    </alternativeName>
</protein>